<reference key="1">
    <citation type="submission" date="2000-07" db="EMBL/GenBank/DDBJ databases">
        <title>Danio rerio 16.5 kDa secretory protein.</title>
        <authorList>
            <person name="Tanguay R.L."/>
        </authorList>
    </citation>
    <scope>NUCLEOTIDE SEQUENCE [MRNA]</scope>
</reference>
<reference key="2">
    <citation type="submission" date="2003-01" db="EMBL/GenBank/DDBJ databases">
        <authorList>
            <consortium name="NIH - Zebrafish Gene Collection (ZGC) project"/>
        </authorList>
    </citation>
    <scope>NUCLEOTIDE SEQUENCE [LARGE SCALE MRNA]</scope>
</reference>
<evidence type="ECO:0000250" key="1"/>
<evidence type="ECO:0000250" key="2">
    <source>
        <dbReference type="UniProtKB" id="P61916"/>
    </source>
</evidence>
<evidence type="ECO:0000250" key="3">
    <source>
        <dbReference type="UniProtKB" id="P79345"/>
    </source>
</evidence>
<evidence type="ECO:0000255" key="4"/>
<evidence type="ECO:0000305" key="5"/>
<keyword id="KW-0153">Cholesterol metabolism</keyword>
<keyword id="KW-1015">Disulfide bond</keyword>
<keyword id="KW-0256">Endoplasmic reticulum</keyword>
<keyword id="KW-0325">Glycoprotein</keyword>
<keyword id="KW-0443">Lipid metabolism</keyword>
<keyword id="KW-0445">Lipid transport</keyword>
<keyword id="KW-0458">Lysosome</keyword>
<keyword id="KW-1185">Reference proteome</keyword>
<keyword id="KW-0964">Secreted</keyword>
<keyword id="KW-0732">Signal</keyword>
<keyword id="KW-0753">Steroid metabolism</keyword>
<keyword id="KW-1207">Sterol metabolism</keyword>
<keyword id="KW-0813">Transport</keyword>
<name>NPC2_DANRE</name>
<organism>
    <name type="scientific">Danio rerio</name>
    <name type="common">Zebrafish</name>
    <name type="synonym">Brachydanio rerio</name>
    <dbReference type="NCBI Taxonomy" id="7955"/>
    <lineage>
        <taxon>Eukaryota</taxon>
        <taxon>Metazoa</taxon>
        <taxon>Chordata</taxon>
        <taxon>Craniata</taxon>
        <taxon>Vertebrata</taxon>
        <taxon>Euteleostomi</taxon>
        <taxon>Actinopterygii</taxon>
        <taxon>Neopterygii</taxon>
        <taxon>Teleostei</taxon>
        <taxon>Ostariophysi</taxon>
        <taxon>Cypriniformes</taxon>
        <taxon>Danionidae</taxon>
        <taxon>Danioninae</taxon>
        <taxon>Danio</taxon>
    </lineage>
</organism>
<dbReference type="EMBL" id="AF291663">
    <property type="protein sequence ID" value="AAF99719.1"/>
    <property type="molecule type" value="mRNA"/>
</dbReference>
<dbReference type="EMBL" id="BC045895">
    <property type="protein sequence ID" value="AAH45895.1"/>
    <property type="molecule type" value="mRNA"/>
</dbReference>
<dbReference type="RefSeq" id="NP_775331.1">
    <property type="nucleotide sequence ID" value="NM_173224.1"/>
</dbReference>
<dbReference type="SMR" id="Q9DGJ3"/>
<dbReference type="FunCoup" id="Q9DGJ3">
    <property type="interactions" value="2243"/>
</dbReference>
<dbReference type="STRING" id="7955.ENSDARP00000050398"/>
<dbReference type="GlyCosmos" id="Q9DGJ3">
    <property type="glycosylation" value="1 site, No reported glycans"/>
</dbReference>
<dbReference type="PaxDb" id="7955-ENSDARP00000050398"/>
<dbReference type="Ensembl" id="ENSDART00000050399">
    <property type="protein sequence ID" value="ENSDARP00000050398"/>
    <property type="gene ID" value="ENSDARG00000090912"/>
</dbReference>
<dbReference type="Ensembl" id="ENSDART00000132754">
    <property type="protein sequence ID" value="ENSDARP00000113663"/>
    <property type="gene ID" value="ENSDARG00000090912"/>
</dbReference>
<dbReference type="GeneID" id="282673"/>
<dbReference type="KEGG" id="dre:282673"/>
<dbReference type="AGR" id="ZFIN:ZDB-GENE-021206-13"/>
<dbReference type="CTD" id="282673"/>
<dbReference type="ZFIN" id="ZDB-GENE-021206-13">
    <property type="gene designation" value="npc2.1"/>
</dbReference>
<dbReference type="eggNOG" id="KOG4063">
    <property type="taxonomic scope" value="Eukaryota"/>
</dbReference>
<dbReference type="HOGENOM" id="CLU_109192_1_0_1"/>
<dbReference type="InParanoid" id="Q9DGJ3"/>
<dbReference type="OMA" id="QNLFCWE"/>
<dbReference type="OrthoDB" id="6489092at2759"/>
<dbReference type="PhylomeDB" id="Q9DGJ3"/>
<dbReference type="TreeFam" id="TF317963"/>
<dbReference type="Reactome" id="R-DRE-6798695">
    <property type="pathway name" value="Neutrophil degranulation"/>
</dbReference>
<dbReference type="Reactome" id="R-DRE-8964038">
    <property type="pathway name" value="LDL clearance"/>
</dbReference>
<dbReference type="PRO" id="PR:Q9DGJ3"/>
<dbReference type="Proteomes" id="UP000000437">
    <property type="component" value="Chromosome 17"/>
</dbReference>
<dbReference type="Bgee" id="ENSDARG00000090912">
    <property type="expression patterns" value="Expressed in early embryo and 28 other cell types or tissues"/>
</dbReference>
<dbReference type="GO" id="GO:0005783">
    <property type="term" value="C:endoplasmic reticulum"/>
    <property type="evidence" value="ECO:0007669"/>
    <property type="project" value="UniProtKB-SubCell"/>
</dbReference>
<dbReference type="GO" id="GO:0005576">
    <property type="term" value="C:extracellular region"/>
    <property type="evidence" value="ECO:0007669"/>
    <property type="project" value="UniProtKB-SubCell"/>
</dbReference>
<dbReference type="GO" id="GO:0005764">
    <property type="term" value="C:lysosome"/>
    <property type="evidence" value="ECO:0007669"/>
    <property type="project" value="UniProtKB-SubCell"/>
</dbReference>
<dbReference type="GO" id="GO:0015485">
    <property type="term" value="F:cholesterol binding"/>
    <property type="evidence" value="ECO:0000318"/>
    <property type="project" value="GO_Central"/>
</dbReference>
<dbReference type="GO" id="GO:0008015">
    <property type="term" value="P:blood circulation"/>
    <property type="evidence" value="ECO:0000315"/>
    <property type="project" value="ZFIN"/>
</dbReference>
<dbReference type="GO" id="GO:0007417">
    <property type="term" value="P:central nervous system development"/>
    <property type="evidence" value="ECO:0000315"/>
    <property type="project" value="ZFIN"/>
</dbReference>
<dbReference type="GO" id="GO:0033344">
    <property type="term" value="P:cholesterol efflux"/>
    <property type="evidence" value="ECO:0000318"/>
    <property type="project" value="GO_Central"/>
</dbReference>
<dbReference type="GO" id="GO:0008203">
    <property type="term" value="P:cholesterol metabolic process"/>
    <property type="evidence" value="ECO:0007669"/>
    <property type="project" value="UniProtKB-KW"/>
</dbReference>
<dbReference type="GO" id="GO:0006954">
    <property type="term" value="P:inflammatory response"/>
    <property type="evidence" value="ECO:0000315"/>
    <property type="project" value="ZFIN"/>
</dbReference>
<dbReference type="GO" id="GO:0032367">
    <property type="term" value="P:intracellular cholesterol transport"/>
    <property type="evidence" value="ECO:0000318"/>
    <property type="project" value="GO_Central"/>
</dbReference>
<dbReference type="GO" id="GO:0061744">
    <property type="term" value="P:motor behavior"/>
    <property type="evidence" value="ECO:0000315"/>
    <property type="project" value="ZFIN"/>
</dbReference>
<dbReference type="GO" id="GO:0042552">
    <property type="term" value="P:myelination"/>
    <property type="evidence" value="ECO:0000315"/>
    <property type="project" value="ZFIN"/>
</dbReference>
<dbReference type="GO" id="GO:0048570">
    <property type="term" value="P:notochord morphogenesis"/>
    <property type="evidence" value="ECO:0000315"/>
    <property type="project" value="ZFIN"/>
</dbReference>
<dbReference type="GO" id="GO:0071599">
    <property type="term" value="P:otic vesicle development"/>
    <property type="evidence" value="ECO:0000315"/>
    <property type="project" value="ZFIN"/>
</dbReference>
<dbReference type="GO" id="GO:0032475">
    <property type="term" value="P:otolith formation"/>
    <property type="evidence" value="ECO:0000315"/>
    <property type="project" value="ZFIN"/>
</dbReference>
<dbReference type="CDD" id="cd00916">
    <property type="entry name" value="Npc2_like"/>
    <property type="match status" value="1"/>
</dbReference>
<dbReference type="FunFam" id="2.60.40.770:FF:000001">
    <property type="entry name" value="NPC intracellular cholesterol transporter 2"/>
    <property type="match status" value="1"/>
</dbReference>
<dbReference type="Gene3D" id="2.60.40.770">
    <property type="match status" value="1"/>
</dbReference>
<dbReference type="InterPro" id="IPR014756">
    <property type="entry name" value="Ig_E-set"/>
</dbReference>
<dbReference type="InterPro" id="IPR003172">
    <property type="entry name" value="ML_dom"/>
</dbReference>
<dbReference type="InterPro" id="IPR033916">
    <property type="entry name" value="ML_Npc2-like"/>
</dbReference>
<dbReference type="InterPro" id="IPR039670">
    <property type="entry name" value="NPC2-like"/>
</dbReference>
<dbReference type="PANTHER" id="PTHR11306">
    <property type="entry name" value="NIEMANN PICK TYPE C2 PROTEIN NPC2-RELATED"/>
    <property type="match status" value="1"/>
</dbReference>
<dbReference type="PANTHER" id="PTHR11306:SF68">
    <property type="entry name" value="NPC INTRACELLULAR CHOLESTEROL TRANSPORTER 2"/>
    <property type="match status" value="1"/>
</dbReference>
<dbReference type="Pfam" id="PF02221">
    <property type="entry name" value="E1_DerP2_DerF2"/>
    <property type="match status" value="1"/>
</dbReference>
<dbReference type="SMART" id="SM00737">
    <property type="entry name" value="ML"/>
    <property type="match status" value="1"/>
</dbReference>
<dbReference type="SUPFAM" id="SSF81296">
    <property type="entry name" value="E set domains"/>
    <property type="match status" value="1"/>
</dbReference>
<sequence>MDYRVLGVVLLSFLAYTCADPVKFVDCGSVDGKVVQVDIKPCSQQPCKLHKGQSYTVNVTFSSGVESQTSKAVVHGVLAGVPVPFPIPIDDGCKSGIQCPIVPQKPYNYVTELPVKTEYPAIKVVVEWELRDDSSKDLFCIKFPVQIVN</sequence>
<protein>
    <recommendedName>
        <fullName evidence="2">NPC intracellular cholesterol transporter 2</fullName>
    </recommendedName>
    <alternativeName>
        <fullName>16.5 kDa secretory protein</fullName>
    </alternativeName>
    <alternativeName>
        <fullName>Epididymal secretory protein E1</fullName>
    </alternativeName>
    <alternativeName>
        <fullName>Niemann Pick type C2 protein homolog</fullName>
    </alternativeName>
</protein>
<gene>
    <name type="primary">npc2</name>
</gene>
<accession>Q9DGJ3</accession>
<proteinExistence type="evidence at transcript level"/>
<comment type="function">
    <text evidence="2">Intracellular cholesterol transporter which acts in concert with NPC1 and plays an important role in the egress of cholesterol from the lysosomal compartment. Unesterified cholesterol that has been released from LDLs in the lumen of the late endosomes/lysosomes is transferred by NPC2 to the cholesterol-binding pocket in the N-terminal domain of NPC1. May bind and mobilize cholesterol that is associated with membranes. NPC2 binds cholesterol with a 1:1 stoichiometry. Can bind a variety of sterols, including lathosterol, desmosterol and the plant sterols stigmasterol and beta-sitosterol.</text>
</comment>
<comment type="catalytic activity">
    <reaction evidence="3">
        <text>cholesterol(in) = cholesterol(out)</text>
        <dbReference type="Rhea" id="RHEA:39747"/>
        <dbReference type="ChEBI" id="CHEBI:16113"/>
    </reaction>
</comment>
<comment type="subunit">
    <text evidence="2">Interacts with NPC1 (via the second lumenal domain) in a cholestrol-dependent manner.</text>
</comment>
<comment type="subcellular location">
    <subcellularLocation>
        <location evidence="2">Secreted</location>
    </subcellularLocation>
    <subcellularLocation>
        <location evidence="2">Endoplasmic reticulum</location>
    </subcellularLocation>
    <subcellularLocation>
        <location evidence="2">Lysosome</location>
    </subcellularLocation>
    <text evidence="2">Interaction with cell-surface M6PR mediates endocytosis and targeting to lysosomes.</text>
</comment>
<comment type="domain">
    <text evidence="3">Binds cholesterol in a hydrophobic pocket; there are no hydrogen bonds between the sterol and the protein.</text>
</comment>
<comment type="similarity">
    <text evidence="5">Belongs to the NPC2 family.</text>
</comment>
<feature type="signal peptide" evidence="1">
    <location>
        <begin position="1"/>
        <end position="19"/>
    </location>
</feature>
<feature type="chain" id="PRO_0000019859" description="NPC intracellular cholesterol transporter 2">
    <location>
        <begin position="20"/>
        <end position="149"/>
    </location>
</feature>
<feature type="glycosylation site" description="N-linked (GlcNAc...) asparagine" evidence="4">
    <location>
        <position position="58"/>
    </location>
</feature>
<feature type="disulfide bond" evidence="2">
    <location>
        <begin position="27"/>
        <end position="140"/>
    </location>
</feature>
<feature type="disulfide bond" evidence="2">
    <location>
        <begin position="42"/>
        <end position="47"/>
    </location>
</feature>
<feature type="disulfide bond" evidence="2">
    <location>
        <begin position="93"/>
        <end position="99"/>
    </location>
</feature>